<protein>
    <recommendedName>
        <fullName evidence="2">Cilia- and flagella-associated protein 91</fullName>
        <shortName evidence="6">CFAP91</shortName>
    </recommendedName>
    <alternativeName>
        <fullName>AMY-1-associating protein expressed in testis 1</fullName>
        <shortName>AAT-1</shortName>
    </alternativeName>
    <alternativeName>
        <fullName>MYCBP/AMY-1-associated testis-expressed protein 1</fullName>
    </alternativeName>
    <alternativeName>
        <fullName>Protein MAATS1</fullName>
    </alternativeName>
</protein>
<accession>Q95LR0</accession>
<accession>Q95JS7</accession>
<accession>Q95K36</accession>
<dbReference type="EMBL" id="AB069991">
    <property type="protein sequence ID" value="BAB62936.1"/>
    <property type="molecule type" value="mRNA"/>
</dbReference>
<dbReference type="EMBL" id="AB070102">
    <property type="protein sequence ID" value="BAB63047.1"/>
    <property type="molecule type" value="mRNA"/>
</dbReference>
<dbReference type="EMBL" id="AB071132">
    <property type="protein sequence ID" value="BAB64526.1"/>
    <property type="molecule type" value="mRNA"/>
</dbReference>
<dbReference type="SMR" id="Q95LR0"/>
<dbReference type="STRING" id="9541.ENSMFAP00000012486"/>
<dbReference type="eggNOG" id="ENOG502QRFI">
    <property type="taxonomic scope" value="Eukaryota"/>
</dbReference>
<dbReference type="Proteomes" id="UP000233100">
    <property type="component" value="Unplaced"/>
</dbReference>
<dbReference type="GO" id="GO:0005930">
    <property type="term" value="C:axoneme"/>
    <property type="evidence" value="ECO:0000250"/>
    <property type="project" value="UniProtKB"/>
</dbReference>
<dbReference type="GO" id="GO:0005739">
    <property type="term" value="C:mitochondrion"/>
    <property type="evidence" value="ECO:0007669"/>
    <property type="project" value="UniProtKB-SubCell"/>
</dbReference>
<dbReference type="GO" id="GO:0031514">
    <property type="term" value="C:motile cilium"/>
    <property type="evidence" value="ECO:0000250"/>
    <property type="project" value="UniProtKB"/>
</dbReference>
<dbReference type="GO" id="GO:1904158">
    <property type="term" value="P:axonemal central apparatus assembly"/>
    <property type="evidence" value="ECO:0000250"/>
    <property type="project" value="UniProtKB"/>
</dbReference>
<dbReference type="GO" id="GO:0030154">
    <property type="term" value="P:cell differentiation"/>
    <property type="evidence" value="ECO:0007669"/>
    <property type="project" value="UniProtKB-KW"/>
</dbReference>
<dbReference type="GO" id="GO:0003341">
    <property type="term" value="P:cilium movement"/>
    <property type="evidence" value="ECO:0000250"/>
    <property type="project" value="UniProtKB"/>
</dbReference>
<dbReference type="GO" id="GO:0007283">
    <property type="term" value="P:spermatogenesis"/>
    <property type="evidence" value="ECO:0000250"/>
    <property type="project" value="UniProtKB"/>
</dbReference>
<dbReference type="InterPro" id="IPR026720">
    <property type="entry name" value="CFAP91"/>
</dbReference>
<dbReference type="InterPro" id="IPR032840">
    <property type="entry name" value="CFAP91_dom"/>
</dbReference>
<dbReference type="PANTHER" id="PTHR22455">
    <property type="entry name" value="CILIA- AND FLAGELLA-ASSOCIATED PROTEIN 91"/>
    <property type="match status" value="1"/>
</dbReference>
<dbReference type="PANTHER" id="PTHR22455:SF10">
    <property type="entry name" value="CILIA- AND FLAGELLA-ASSOCIATED PROTEIN 91"/>
    <property type="match status" value="1"/>
</dbReference>
<dbReference type="Pfam" id="PF14738">
    <property type="entry name" value="CFAP91"/>
    <property type="match status" value="1"/>
</dbReference>
<feature type="chain" id="PRO_0000064418" description="Cilia- and flagella-associated protein 91">
    <location>
        <begin position="1"/>
        <end position="767"/>
    </location>
</feature>
<feature type="region of interest" description="Disordered" evidence="4">
    <location>
        <begin position="1"/>
        <end position="29"/>
    </location>
</feature>
<feature type="compositionally biased region" description="Polar residues" evidence="4">
    <location>
        <begin position="8"/>
        <end position="19"/>
    </location>
</feature>
<feature type="splice variant" id="VSP_014913" description="In isoform 2." evidence="5">
    <location>
        <begin position="81"/>
        <end position="595"/>
    </location>
</feature>
<feature type="splice variant" id="VSP_059501" description="In isoform 1.">
    <location>
        <begin position="330"/>
        <end position="493"/>
    </location>
</feature>
<feature type="sequence conflict" description="In Ref. 1; BAB63047." evidence="6" ref="1">
    <original>S</original>
    <variation>N</variation>
    <location>
        <position position="78"/>
    </location>
</feature>
<feature type="sequence conflict" description="In Ref. 1; BAB64526." evidence="6" ref="1">
    <original>RQ</original>
    <variation>QL</variation>
    <location>
        <begin position="116"/>
        <end position="117"/>
    </location>
</feature>
<feature type="sequence conflict" description="In Ref. 1; BAB62936." evidence="6" ref="1">
    <original>S</original>
    <variation>P</variation>
    <location>
        <position position="185"/>
    </location>
</feature>
<feature type="sequence conflict" description="In Ref. 1; BAB64526." evidence="6" ref="1">
    <original>E</original>
    <variation>K</variation>
    <location>
        <position position="611"/>
    </location>
</feature>
<feature type="sequence conflict" description="In Ref. 1; BAB62936." evidence="6" ref="1">
    <original>K</original>
    <variation>E</variation>
    <location>
        <position position="721"/>
    </location>
</feature>
<feature type="sequence conflict" description="In Ref. 1; BAB63047." evidence="6" ref="1">
    <original>K</original>
    <variation>E</variation>
    <location>
        <position position="759"/>
    </location>
</feature>
<reference key="1">
    <citation type="journal article" date="2002" name="BMC Genomics">
        <title>Cynomolgus monkey testicular cDNAs for discovery of novel human genes in the human genome sequence.</title>
        <authorList>
            <person name="Osada N."/>
            <person name="Hida M."/>
            <person name="Kusuda J."/>
            <person name="Tanuma R."/>
            <person name="Hirata M."/>
            <person name="Suto Y."/>
            <person name="Hirai M."/>
            <person name="Terao K."/>
            <person name="Sugano S."/>
            <person name="Hashimoto K."/>
        </authorList>
    </citation>
    <scope>NUCLEOTIDE SEQUENCE [LARGE SCALE MRNA] (ISOFORMS 1; 2 AND 3)</scope>
    <source>
        <tissue>Testis</tissue>
    </source>
</reference>
<reference key="2">
    <citation type="journal article" date="2005" name="Biol. Pharm. Bull.">
        <title>Structure and characterization of AAT-1 isoforms.</title>
        <authorList>
            <person name="Matsuda E."/>
            <person name="Ishizaki R."/>
            <person name="Taira T."/>
            <person name="Iguchi-Ariga S.M.M."/>
            <person name="Ariga H."/>
        </authorList>
    </citation>
    <scope>ALTERNATIVE SPLICING (ISOFORMS 1; 2 AND 3)</scope>
</reference>
<keyword id="KW-0025">Alternative splicing</keyword>
<keyword id="KW-0966">Cell projection</keyword>
<keyword id="KW-0963">Cytoplasm</keyword>
<keyword id="KW-0206">Cytoskeleton</keyword>
<keyword id="KW-0221">Differentiation</keyword>
<keyword id="KW-0496">Mitochondrion</keyword>
<keyword id="KW-1185">Reference proteome</keyword>
<keyword id="KW-0744">Spermatogenesis</keyword>
<sequence>MSHAVTIQEPQAQPQVSQTRYRERSRAGSHISSNRAYDFLYDPLFIVSSEKDHTQANIQATLIRSRLRKVPRFKTMFSNLIHYPRYSLYWSKSDPVPPFISRQWKGHEEKHREALRQLAITDTSFQMPREVYEDPEVTGKNRYKYFERPFLPFFQQMPFNVVYAISKAEPYTFPPTSTKQLSIPSKLTVGTQTDYRDADVQTDPYSPEYVVCQDSIPELLTLATLTWGRGLPAGQAEVEMIERAREKRAWEATLPALSDTSQFEKRRKMMNEMERKEWAFREQEIEKLQEIRLEVLKELLRKREENQNEVNMKHLNARWSKLQEAKEAKMATIQRTHVSTIRKLVGKGKNIEGKLERRNITKDYSDYASQVYGPLSRLGCFPDNNSEDFVVKNYYLNTYEGLVELESRLPDFVTQPRIRAPKPKVITTKAGFLKRAARLDYELAEVHKALLDKKNKVLEARKPPRFLQRNPIPQPRLPTPTLEMTSNEEEEIEMAVIYLQKLLRGRVIQNMMFEGKEKRLELIQELRTCHALQEDEKLVKKAEKQVTLALQRQRNLHEHKVSLVENHLAGLEGRALADMFDFLSKELVRLQEERRIHAFVMLAERQRRIREAEESGRRQVEKQRLREEDEIFKEVVKVHHSTISSYLEDIILNTEANTAEEQARAEIEKMAEKINDIAYEMESRRTYLQSEEIVAELVYSFLIPEVQKYFVKEKVRNAQRKHILAAHQIIHSCTESMVQKRLTEGQQDEASNAAMLLEKEIQNENNS</sequence>
<organism>
    <name type="scientific">Macaca fascicularis</name>
    <name type="common">Crab-eating macaque</name>
    <name type="synonym">Cynomolgus monkey</name>
    <dbReference type="NCBI Taxonomy" id="9541"/>
    <lineage>
        <taxon>Eukaryota</taxon>
        <taxon>Metazoa</taxon>
        <taxon>Chordata</taxon>
        <taxon>Craniata</taxon>
        <taxon>Vertebrata</taxon>
        <taxon>Euteleostomi</taxon>
        <taxon>Mammalia</taxon>
        <taxon>Eutheria</taxon>
        <taxon>Euarchontoglires</taxon>
        <taxon>Primates</taxon>
        <taxon>Haplorrhini</taxon>
        <taxon>Catarrhini</taxon>
        <taxon>Cercopithecidae</taxon>
        <taxon>Cercopithecinae</taxon>
        <taxon>Macaca</taxon>
    </lineage>
</organism>
<name>CFA91_MACFA</name>
<gene>
    <name type="primary">CFAP91</name>
    <name type="synonym">AAT1</name>
    <name evidence="2" type="synonym">MAATS1</name>
    <name type="ORF">QtsA-10510</name>
    <name type="ORF">QtsA-13847</name>
    <name type="ORF">QtsA-19865</name>
</gene>
<proteinExistence type="evidence at transcript level"/>
<comment type="function">
    <text evidence="1 2">Involved in sperm flagellum axonemal organization and function (By similarity). May regulate cilium motility through its role in the assembly of the axonemal radial spokes (By similarity).</text>
</comment>
<comment type="subunit">
    <text evidence="2 3">Part of a complex containing MYCBP, AKAP1 and PRKAR2B. Interacts with MYCBP and AKAP1. Interacts with CFAP61 (By similarity).</text>
</comment>
<comment type="subcellular location">
    <subcellularLocation>
        <location evidence="2">Cytoplasm</location>
    </subcellularLocation>
    <subcellularLocation>
        <location evidence="2">Mitochondrion</location>
    </subcellularLocation>
    <subcellularLocation>
        <location evidence="1">Cytoplasm</location>
        <location evidence="1">Cytoskeleton</location>
        <location evidence="1">Cilium axoneme</location>
    </subcellularLocation>
</comment>
<comment type="alternative products">
    <event type="alternative splicing"/>
    <isoform>
        <id>Q95LR0-3</id>
        <name>3</name>
        <name>AAT-1L</name>
        <sequence type="displayed"/>
    </isoform>
    <isoform>
        <id>Q95LR0-1</id>
        <name>1</name>
        <name>AAT-1M</name>
        <sequence type="described" ref="VSP_059501"/>
    </isoform>
    <isoform>
        <id>Q95LR0-2</id>
        <name>2</name>
        <name>AAT-1S</name>
        <sequence type="described" ref="VSP_014913"/>
    </isoform>
</comment>
<comment type="PTM">
    <text evidence="2">Phosphorylated by PKA.</text>
</comment>
<comment type="similarity">
    <text>Belongs to the CFAP91 family.</text>
</comment>
<evidence type="ECO:0000250" key="1">
    <source>
        <dbReference type="UniProtKB" id="A8IH47"/>
    </source>
</evidence>
<evidence type="ECO:0000250" key="2">
    <source>
        <dbReference type="UniProtKB" id="Q7Z4T9"/>
    </source>
</evidence>
<evidence type="ECO:0000250" key="3">
    <source>
        <dbReference type="UniProtKB" id="Q8BRC6"/>
    </source>
</evidence>
<evidence type="ECO:0000256" key="4">
    <source>
        <dbReference type="SAM" id="MobiDB-lite"/>
    </source>
</evidence>
<evidence type="ECO:0000303" key="5">
    <source>
    </source>
</evidence>
<evidence type="ECO:0000305" key="6"/>